<comment type="function">
    <text evidence="1">An aminoacyl-tRNA editing enzyme that deacylates mischarged D-aminoacyl-tRNAs. Also deacylates mischarged glycyl-tRNA(Ala), protecting cells against glycine mischarging by AlaRS. Acts via tRNA-based rather than protein-based catalysis; rejects L-amino acids rather than detecting D-amino acids in the active site. By recycling D-aminoacyl-tRNA to D-amino acids and free tRNA molecules, this enzyme counteracts the toxicity associated with the formation of D-aminoacyl-tRNA entities in vivo and helps enforce protein L-homochirality.</text>
</comment>
<comment type="catalytic activity">
    <reaction evidence="1">
        <text>glycyl-tRNA(Ala) + H2O = tRNA(Ala) + glycine + H(+)</text>
        <dbReference type="Rhea" id="RHEA:53744"/>
        <dbReference type="Rhea" id="RHEA-COMP:9657"/>
        <dbReference type="Rhea" id="RHEA-COMP:13640"/>
        <dbReference type="ChEBI" id="CHEBI:15377"/>
        <dbReference type="ChEBI" id="CHEBI:15378"/>
        <dbReference type="ChEBI" id="CHEBI:57305"/>
        <dbReference type="ChEBI" id="CHEBI:78442"/>
        <dbReference type="ChEBI" id="CHEBI:78522"/>
        <dbReference type="EC" id="3.1.1.96"/>
    </reaction>
</comment>
<comment type="catalytic activity">
    <reaction evidence="1">
        <text>a D-aminoacyl-tRNA + H2O = a tRNA + a D-alpha-amino acid + H(+)</text>
        <dbReference type="Rhea" id="RHEA:13953"/>
        <dbReference type="Rhea" id="RHEA-COMP:10123"/>
        <dbReference type="Rhea" id="RHEA-COMP:10124"/>
        <dbReference type="ChEBI" id="CHEBI:15377"/>
        <dbReference type="ChEBI" id="CHEBI:15378"/>
        <dbReference type="ChEBI" id="CHEBI:59871"/>
        <dbReference type="ChEBI" id="CHEBI:78442"/>
        <dbReference type="ChEBI" id="CHEBI:79333"/>
        <dbReference type="EC" id="3.1.1.96"/>
    </reaction>
</comment>
<comment type="subunit">
    <text evidence="1">Homodimer.</text>
</comment>
<comment type="subcellular location">
    <subcellularLocation>
        <location evidence="1">Cytoplasm</location>
    </subcellularLocation>
</comment>
<comment type="domain">
    <text evidence="1">A Gly-cisPro motif from one monomer fits into the active site of the other monomer to allow specific chiral rejection of L-amino acids.</text>
</comment>
<comment type="similarity">
    <text evidence="1">Belongs to the DTD family.</text>
</comment>
<feature type="chain" id="PRO_1000060907" description="D-aminoacyl-tRNA deacylase">
    <location>
        <begin position="1"/>
        <end position="145"/>
    </location>
</feature>
<feature type="short sequence motif" description="Gly-cisPro motif, important for rejection of L-amino acids" evidence="1">
    <location>
        <begin position="137"/>
        <end position="138"/>
    </location>
</feature>
<protein>
    <recommendedName>
        <fullName evidence="1">D-aminoacyl-tRNA deacylase</fullName>
        <shortName evidence="1">DTD</shortName>
        <ecNumber evidence="1">3.1.1.96</ecNumber>
    </recommendedName>
    <alternativeName>
        <fullName evidence="1">Gly-tRNA(Ala) deacylase</fullName>
    </alternativeName>
</protein>
<proteinExistence type="inferred from homology"/>
<evidence type="ECO:0000255" key="1">
    <source>
        <dbReference type="HAMAP-Rule" id="MF_00518"/>
    </source>
</evidence>
<reference key="1">
    <citation type="journal article" date="2008" name="J. Bacteriol.">
        <title>The pangenome structure of Escherichia coli: comparative genomic analysis of E. coli commensal and pathogenic isolates.</title>
        <authorList>
            <person name="Rasko D.A."/>
            <person name="Rosovitz M.J."/>
            <person name="Myers G.S.A."/>
            <person name="Mongodin E.F."/>
            <person name="Fricke W.F."/>
            <person name="Gajer P."/>
            <person name="Crabtree J."/>
            <person name="Sebaihia M."/>
            <person name="Thomson N.R."/>
            <person name="Chaudhuri R."/>
            <person name="Henderson I.R."/>
            <person name="Sperandio V."/>
            <person name="Ravel J."/>
        </authorList>
    </citation>
    <scope>NUCLEOTIDE SEQUENCE [LARGE SCALE GENOMIC DNA]</scope>
    <source>
        <strain>HS</strain>
    </source>
</reference>
<sequence length="145" mass="15950">MIALIQRVTRASVTVEGEVTGEIGAGLLVLLGVEKDDDEQKANRLCERVLGYRIFSDAEGKMNLNVQQAGGSVLVVSQFTLAADTERGMRPSFSKGASPDRAEALYDYFVERCRQQEMNTQTGRFAADMQVSLVNDGPVTFWLQV</sequence>
<keyword id="KW-0963">Cytoplasm</keyword>
<keyword id="KW-0378">Hydrolase</keyword>
<keyword id="KW-0694">RNA-binding</keyword>
<keyword id="KW-0820">tRNA-binding</keyword>
<name>DTD_ECOHS</name>
<accession>A8A6Y8</accession>
<dbReference type="EC" id="3.1.1.96" evidence="1"/>
<dbReference type="EMBL" id="CP000802">
    <property type="protein sequence ID" value="ABV08292.1"/>
    <property type="molecule type" value="Genomic_DNA"/>
</dbReference>
<dbReference type="RefSeq" id="WP_000560983.1">
    <property type="nucleotide sequence ID" value="NC_009800.1"/>
</dbReference>
<dbReference type="SMR" id="A8A6Y8"/>
<dbReference type="GeneID" id="93778051"/>
<dbReference type="KEGG" id="ecx:EcHS_A4112"/>
<dbReference type="HOGENOM" id="CLU_076901_1_0_6"/>
<dbReference type="GO" id="GO:0005737">
    <property type="term" value="C:cytoplasm"/>
    <property type="evidence" value="ECO:0007669"/>
    <property type="project" value="UniProtKB-SubCell"/>
</dbReference>
<dbReference type="GO" id="GO:0051500">
    <property type="term" value="F:D-tyrosyl-tRNA(Tyr) deacylase activity"/>
    <property type="evidence" value="ECO:0007669"/>
    <property type="project" value="TreeGrafter"/>
</dbReference>
<dbReference type="GO" id="GO:0106026">
    <property type="term" value="F:Gly-tRNA(Ala) deacylase activity"/>
    <property type="evidence" value="ECO:0007669"/>
    <property type="project" value="UniProtKB-UniRule"/>
</dbReference>
<dbReference type="GO" id="GO:0043908">
    <property type="term" value="F:Ser(Gly)-tRNA(Ala) hydrolase activity"/>
    <property type="evidence" value="ECO:0007669"/>
    <property type="project" value="UniProtKB-UniRule"/>
</dbReference>
<dbReference type="GO" id="GO:0000049">
    <property type="term" value="F:tRNA binding"/>
    <property type="evidence" value="ECO:0007669"/>
    <property type="project" value="UniProtKB-UniRule"/>
</dbReference>
<dbReference type="GO" id="GO:0019478">
    <property type="term" value="P:D-amino acid catabolic process"/>
    <property type="evidence" value="ECO:0007669"/>
    <property type="project" value="UniProtKB-UniRule"/>
</dbReference>
<dbReference type="CDD" id="cd00563">
    <property type="entry name" value="Dtyr_deacylase"/>
    <property type="match status" value="1"/>
</dbReference>
<dbReference type="FunFam" id="3.50.80.10:FF:000001">
    <property type="entry name" value="D-aminoacyl-tRNA deacylase"/>
    <property type="match status" value="1"/>
</dbReference>
<dbReference type="Gene3D" id="3.50.80.10">
    <property type="entry name" value="D-tyrosyl-tRNA(Tyr) deacylase"/>
    <property type="match status" value="1"/>
</dbReference>
<dbReference type="HAMAP" id="MF_00518">
    <property type="entry name" value="Deacylase_Dtd"/>
    <property type="match status" value="1"/>
</dbReference>
<dbReference type="InterPro" id="IPR003732">
    <property type="entry name" value="Daa-tRNA_deacyls_DTD"/>
</dbReference>
<dbReference type="InterPro" id="IPR023509">
    <property type="entry name" value="DTD-like_sf"/>
</dbReference>
<dbReference type="NCBIfam" id="TIGR00256">
    <property type="entry name" value="D-aminoacyl-tRNA deacylase"/>
    <property type="match status" value="1"/>
</dbReference>
<dbReference type="PANTHER" id="PTHR10472:SF5">
    <property type="entry name" value="D-AMINOACYL-TRNA DEACYLASE 1"/>
    <property type="match status" value="1"/>
</dbReference>
<dbReference type="PANTHER" id="PTHR10472">
    <property type="entry name" value="D-TYROSYL-TRNA TYR DEACYLASE"/>
    <property type="match status" value="1"/>
</dbReference>
<dbReference type="Pfam" id="PF02580">
    <property type="entry name" value="Tyr_Deacylase"/>
    <property type="match status" value="1"/>
</dbReference>
<dbReference type="SUPFAM" id="SSF69500">
    <property type="entry name" value="DTD-like"/>
    <property type="match status" value="1"/>
</dbReference>
<gene>
    <name evidence="1" type="primary">dtd</name>
    <name type="ordered locus">EcHS_A4112</name>
</gene>
<organism>
    <name type="scientific">Escherichia coli O9:H4 (strain HS)</name>
    <dbReference type="NCBI Taxonomy" id="331112"/>
    <lineage>
        <taxon>Bacteria</taxon>
        <taxon>Pseudomonadati</taxon>
        <taxon>Pseudomonadota</taxon>
        <taxon>Gammaproteobacteria</taxon>
        <taxon>Enterobacterales</taxon>
        <taxon>Enterobacteriaceae</taxon>
        <taxon>Escherichia</taxon>
    </lineage>
</organism>